<name>GLYA_WOLTR</name>
<protein>
    <recommendedName>
        <fullName evidence="1">Serine hydroxymethyltransferase</fullName>
        <shortName evidence="1">SHMT</shortName>
        <shortName evidence="1">Serine methylase</shortName>
        <ecNumber evidence="1">2.1.2.1</ecNumber>
    </recommendedName>
</protein>
<sequence length="425" mass="46706">MTNVSERIYDSKNSLKFLDDEIYQSIERELQRQRSQLQLIASENFASKAVMEAQGSFLTNKYAEGYIGKRYYCGCEYVDEVENLAIERLCKLFNVRFANVQPHSGSQANQAVFASLLTPGDTILGLSISCGGHLTHGAAPNLSGKWFKSIQYAIDRGTCLLDMDEVERLALEHKPKLIIAGASAYPRRMDFKRFREIADKVSAYLLADIAHYAGLIAAGEYPSPAKYAHIITSTTHKTLRGPRGGVVITNDEALHKKVQSAVFPGLQGGPLMHVIAAKAVAFKEALAPEFKAYIKRVVENAKVLAQALQKHGLSVITGGTDSHIVLVDLRPQKLTGKGAVDSLERAGITCNKNSVPFDMEKPTITSGLRFGTAAETTRGLKAENFKEIADLINEVIQGLINGNNSDVERIVKNKVKKICDDFPIY</sequence>
<gene>
    <name evidence="1" type="primary">glyA</name>
    <name type="ordered locus">Wbm0005</name>
</gene>
<reference key="1">
    <citation type="journal article" date="2005" name="PLoS Biol.">
        <title>The Wolbachia genome of Brugia malayi: endosymbiont evolution within a human pathogenic nematode.</title>
        <authorList>
            <person name="Foster J."/>
            <person name="Ganatra M."/>
            <person name="Kamal I."/>
            <person name="Ware J."/>
            <person name="Makarova K."/>
            <person name="Ivanova N."/>
            <person name="Bhattacharyya A."/>
            <person name="Kapatral V."/>
            <person name="Kumar S."/>
            <person name="Posfai J."/>
            <person name="Vincze T."/>
            <person name="Ingram J."/>
            <person name="Moran L."/>
            <person name="Lapidus A."/>
            <person name="Omelchenko M."/>
            <person name="Kyrpides N."/>
            <person name="Ghedin E."/>
            <person name="Wang S."/>
            <person name="Goltsman E."/>
            <person name="Joukov V."/>
            <person name="Ostrovskaya O."/>
            <person name="Tsukerman K."/>
            <person name="Mazur M."/>
            <person name="Comb D."/>
            <person name="Koonin E."/>
            <person name="Slatko B."/>
        </authorList>
    </citation>
    <scope>NUCLEOTIDE SEQUENCE [LARGE SCALE GENOMIC DNA]</scope>
    <source>
        <strain>TRS</strain>
    </source>
</reference>
<keyword id="KW-0028">Amino-acid biosynthesis</keyword>
<keyword id="KW-0963">Cytoplasm</keyword>
<keyword id="KW-0554">One-carbon metabolism</keyword>
<keyword id="KW-0663">Pyridoxal phosphate</keyword>
<keyword id="KW-1185">Reference proteome</keyword>
<keyword id="KW-0808">Transferase</keyword>
<proteinExistence type="inferred from homology"/>
<evidence type="ECO:0000255" key="1">
    <source>
        <dbReference type="HAMAP-Rule" id="MF_00051"/>
    </source>
</evidence>
<dbReference type="EC" id="2.1.2.1" evidence="1"/>
<dbReference type="EMBL" id="AE017321">
    <property type="protein sequence ID" value="AAW70597.1"/>
    <property type="molecule type" value="Genomic_DNA"/>
</dbReference>
<dbReference type="RefSeq" id="WP_011256207.1">
    <property type="nucleotide sequence ID" value="NC_006833.1"/>
</dbReference>
<dbReference type="SMR" id="Q5GTS7"/>
<dbReference type="STRING" id="292805.Wbm0005"/>
<dbReference type="KEGG" id="wbm:Wbm0005"/>
<dbReference type="eggNOG" id="COG0112">
    <property type="taxonomic scope" value="Bacteria"/>
</dbReference>
<dbReference type="HOGENOM" id="CLU_022477_2_1_5"/>
<dbReference type="UniPathway" id="UPA00193"/>
<dbReference type="UniPathway" id="UPA00288">
    <property type="reaction ID" value="UER01023"/>
</dbReference>
<dbReference type="Proteomes" id="UP000000534">
    <property type="component" value="Chromosome"/>
</dbReference>
<dbReference type="GO" id="GO:0005829">
    <property type="term" value="C:cytosol"/>
    <property type="evidence" value="ECO:0007669"/>
    <property type="project" value="TreeGrafter"/>
</dbReference>
<dbReference type="GO" id="GO:0004372">
    <property type="term" value="F:glycine hydroxymethyltransferase activity"/>
    <property type="evidence" value="ECO:0007669"/>
    <property type="project" value="UniProtKB-UniRule"/>
</dbReference>
<dbReference type="GO" id="GO:0030170">
    <property type="term" value="F:pyridoxal phosphate binding"/>
    <property type="evidence" value="ECO:0007669"/>
    <property type="project" value="UniProtKB-UniRule"/>
</dbReference>
<dbReference type="GO" id="GO:0019264">
    <property type="term" value="P:glycine biosynthetic process from serine"/>
    <property type="evidence" value="ECO:0007669"/>
    <property type="project" value="UniProtKB-UniRule"/>
</dbReference>
<dbReference type="GO" id="GO:0035999">
    <property type="term" value="P:tetrahydrofolate interconversion"/>
    <property type="evidence" value="ECO:0007669"/>
    <property type="project" value="UniProtKB-UniRule"/>
</dbReference>
<dbReference type="CDD" id="cd00378">
    <property type="entry name" value="SHMT"/>
    <property type="match status" value="1"/>
</dbReference>
<dbReference type="FunFam" id="3.40.640.10:FF:000001">
    <property type="entry name" value="Serine hydroxymethyltransferase"/>
    <property type="match status" value="1"/>
</dbReference>
<dbReference type="Gene3D" id="3.90.1150.10">
    <property type="entry name" value="Aspartate Aminotransferase, domain 1"/>
    <property type="match status" value="1"/>
</dbReference>
<dbReference type="Gene3D" id="3.40.640.10">
    <property type="entry name" value="Type I PLP-dependent aspartate aminotransferase-like (Major domain)"/>
    <property type="match status" value="1"/>
</dbReference>
<dbReference type="HAMAP" id="MF_00051">
    <property type="entry name" value="SHMT"/>
    <property type="match status" value="1"/>
</dbReference>
<dbReference type="InterPro" id="IPR015424">
    <property type="entry name" value="PyrdxlP-dep_Trfase"/>
</dbReference>
<dbReference type="InterPro" id="IPR015421">
    <property type="entry name" value="PyrdxlP-dep_Trfase_major"/>
</dbReference>
<dbReference type="InterPro" id="IPR015422">
    <property type="entry name" value="PyrdxlP-dep_Trfase_small"/>
</dbReference>
<dbReference type="InterPro" id="IPR001085">
    <property type="entry name" value="Ser_HO-MeTrfase"/>
</dbReference>
<dbReference type="InterPro" id="IPR049943">
    <property type="entry name" value="Ser_HO-MeTrfase-like"/>
</dbReference>
<dbReference type="InterPro" id="IPR019798">
    <property type="entry name" value="Ser_HO-MeTrfase_PLP_BS"/>
</dbReference>
<dbReference type="InterPro" id="IPR039429">
    <property type="entry name" value="SHMT-like_dom"/>
</dbReference>
<dbReference type="NCBIfam" id="NF000586">
    <property type="entry name" value="PRK00011.1"/>
    <property type="match status" value="1"/>
</dbReference>
<dbReference type="PANTHER" id="PTHR11680">
    <property type="entry name" value="SERINE HYDROXYMETHYLTRANSFERASE"/>
    <property type="match status" value="1"/>
</dbReference>
<dbReference type="PANTHER" id="PTHR11680:SF35">
    <property type="entry name" value="SERINE HYDROXYMETHYLTRANSFERASE 1"/>
    <property type="match status" value="1"/>
</dbReference>
<dbReference type="Pfam" id="PF00464">
    <property type="entry name" value="SHMT"/>
    <property type="match status" value="1"/>
</dbReference>
<dbReference type="PIRSF" id="PIRSF000412">
    <property type="entry name" value="SHMT"/>
    <property type="match status" value="1"/>
</dbReference>
<dbReference type="SUPFAM" id="SSF53383">
    <property type="entry name" value="PLP-dependent transferases"/>
    <property type="match status" value="1"/>
</dbReference>
<dbReference type="PROSITE" id="PS00096">
    <property type="entry name" value="SHMT"/>
    <property type="match status" value="1"/>
</dbReference>
<comment type="function">
    <text evidence="1">Catalyzes the reversible interconversion of serine and glycine with tetrahydrofolate (THF) serving as the one-carbon carrier. This reaction serves as the major source of one-carbon groups required for the biosynthesis of purines, thymidylate, methionine, and other important biomolecules. Also exhibits THF-independent aldolase activity toward beta-hydroxyamino acids, producing glycine and aldehydes, via a retro-aldol mechanism.</text>
</comment>
<comment type="catalytic activity">
    <reaction evidence="1">
        <text>(6R)-5,10-methylene-5,6,7,8-tetrahydrofolate + glycine + H2O = (6S)-5,6,7,8-tetrahydrofolate + L-serine</text>
        <dbReference type="Rhea" id="RHEA:15481"/>
        <dbReference type="ChEBI" id="CHEBI:15377"/>
        <dbReference type="ChEBI" id="CHEBI:15636"/>
        <dbReference type="ChEBI" id="CHEBI:33384"/>
        <dbReference type="ChEBI" id="CHEBI:57305"/>
        <dbReference type="ChEBI" id="CHEBI:57453"/>
        <dbReference type="EC" id="2.1.2.1"/>
    </reaction>
</comment>
<comment type="cofactor">
    <cofactor evidence="1">
        <name>pyridoxal 5'-phosphate</name>
        <dbReference type="ChEBI" id="CHEBI:597326"/>
    </cofactor>
</comment>
<comment type="pathway">
    <text evidence="1">One-carbon metabolism; tetrahydrofolate interconversion.</text>
</comment>
<comment type="pathway">
    <text evidence="1">Amino-acid biosynthesis; glycine biosynthesis; glycine from L-serine: step 1/1.</text>
</comment>
<comment type="subunit">
    <text evidence="1">Homodimer.</text>
</comment>
<comment type="subcellular location">
    <subcellularLocation>
        <location evidence="1">Cytoplasm</location>
    </subcellularLocation>
</comment>
<comment type="similarity">
    <text evidence="1">Belongs to the SHMT family.</text>
</comment>
<accession>Q5GTS7</accession>
<feature type="chain" id="PRO_0000235048" description="Serine hydroxymethyltransferase">
    <location>
        <begin position="1"/>
        <end position="425"/>
    </location>
</feature>
<feature type="binding site" evidence="1">
    <location>
        <begin position="132"/>
        <end position="134"/>
    </location>
    <ligand>
        <name>(6S)-5,6,7,8-tetrahydrofolate</name>
        <dbReference type="ChEBI" id="CHEBI:57453"/>
    </ligand>
</feature>
<feature type="site" description="Plays an important role in substrate specificity" evidence="1">
    <location>
        <position position="236"/>
    </location>
</feature>
<feature type="modified residue" description="N6-(pyridoxal phosphate)lysine" evidence="1">
    <location>
        <position position="237"/>
    </location>
</feature>
<organism>
    <name type="scientific">Wolbachia sp. subsp. Brugia malayi (strain TRS)</name>
    <dbReference type="NCBI Taxonomy" id="292805"/>
    <lineage>
        <taxon>Bacteria</taxon>
        <taxon>Pseudomonadati</taxon>
        <taxon>Pseudomonadota</taxon>
        <taxon>Alphaproteobacteria</taxon>
        <taxon>Rickettsiales</taxon>
        <taxon>Anaplasmataceae</taxon>
        <taxon>Wolbachieae</taxon>
        <taxon>Wolbachia</taxon>
    </lineage>
</organism>